<keyword id="KW-0157">Chromophore</keyword>
<keyword id="KW-0600">Photoreceptor protein</keyword>
<keyword id="KW-0675">Receptor</keyword>
<keyword id="KW-1185">Reference proteome</keyword>
<keyword id="KW-0677">Repeat</keyword>
<keyword id="KW-0716">Sensory transduction</keyword>
<keyword id="KW-0804">Transcription</keyword>
<keyword id="KW-0805">Transcription regulation</keyword>
<protein>
    <recommendedName>
        <fullName>Phytochrome B</fullName>
    </recommendedName>
</protein>
<comment type="function">
    <text>Regulatory photoreceptor which exists in two forms that are reversibly interconvertible by light: the Pr form that absorbs maximally in the red region of the spectrum and the Pfr form that absorbs maximally in the far-red region. Photoconversion of Pr to Pfr induces an array of morphogenic responses, whereas reconversion of Pfr to Pr cancels the induction of those responses. Pfr controls the expression of a number of nuclear genes including those encoding the small subunit of ribulose-bisphosphate carboxylase, chlorophyll A/B binding protein, protochlorophyllide reductase, rRNA, etc. It also controls the expression of its own gene(s) in a negative feedback fashion.</text>
</comment>
<comment type="subunit">
    <text>Homodimer.</text>
</comment>
<comment type="PTM">
    <text evidence="1">Contains one covalently linked phytochromobilin chromophore.</text>
</comment>
<comment type="similarity">
    <text evidence="5">Belongs to the phytochrome family.</text>
</comment>
<accession>P29130</accession>
<reference key="1">
    <citation type="journal article" date="1993" name="Plant Physiol.">
        <title>phyB of tobacco, a new member of the phytochrome family.</title>
        <authorList>
            <person name="Kern R."/>
            <person name="Gasch A."/>
            <person name="Deak M."/>
            <person name="Kay S.A."/>
            <person name="Chua N.H."/>
        </authorList>
    </citation>
    <scope>NUCLEOTIDE SEQUENCE [GENOMIC DNA]</scope>
</reference>
<reference key="2">
    <citation type="journal article" date="1992" name="Plant Cell">
        <title>The cucumber long hypocotyl mutant lacks a light-stable PHYB-like phytochrome.</title>
        <authorList>
            <person name="Lopez-Juez E."/>
            <person name="Nagatani A."/>
            <person name="Tomizawa K."/>
            <person name="Deak M."/>
            <person name="Kern R."/>
            <person name="Kendrick R.E."/>
            <person name="Furuya M."/>
        </authorList>
    </citation>
    <scope>NUCLEOTIDE SEQUENCE [MRNA] OF 457-1132</scope>
</reference>
<organism>
    <name type="scientific">Nicotiana tabacum</name>
    <name type="common">Common tobacco</name>
    <dbReference type="NCBI Taxonomy" id="4097"/>
    <lineage>
        <taxon>Eukaryota</taxon>
        <taxon>Viridiplantae</taxon>
        <taxon>Streptophyta</taxon>
        <taxon>Embryophyta</taxon>
        <taxon>Tracheophyta</taxon>
        <taxon>Spermatophyta</taxon>
        <taxon>Magnoliopsida</taxon>
        <taxon>eudicotyledons</taxon>
        <taxon>Gunneridae</taxon>
        <taxon>Pentapetalae</taxon>
        <taxon>asterids</taxon>
        <taxon>lamiids</taxon>
        <taxon>Solanales</taxon>
        <taxon>Solanaceae</taxon>
        <taxon>Nicotianoideae</taxon>
        <taxon>Nicotianeae</taxon>
        <taxon>Nicotiana</taxon>
    </lineage>
</organism>
<proteinExistence type="evidence at transcript level"/>
<sequence length="1132" mass="125809">MASGSRTKHSHQSGQGQVQAQSSGTSNVNYKDSISKAIAQYTADARLHAVFEQSGESGKSFDYSQSIKTTTQSVVPEQQITAYLTKIQRGGHIQPFGCMIAVDEASFRVIAYSENACEMLSLTPQSVPSLERPEILTVGTDVRTLFTPSSSVLLERAFGAREITLLNPIWIHSKNSGKPFYAILHRVDVGIVIDLEPARTEDPALSIAGAVQSQKLAVRAISHLQSLPGGDVKLLCDTVVESVRELTGYDRVMVYKFHEDEHGEVVAESKIPDLEPYIGLHYPATDIPQASRFLFKQNRVRMIVDCHATPVRVVQDESLMQPLCLVGSTLRAPHGCHAQYMANMGSIASLTLAVIINGNDEEAVGGRSSMRLWGLVVGHHTSARCIPFPLRYACEFLMQAFGLQLNMELQLASQLSEKHVLRTQTLLCDMLLRDSPTGIVIQSPSIMDLVKCDGAALYCQGKYYPLGVTPTEAQIKDIVEWLLTYHGDSTGLSTDSLADAGYPGAALLGDAVCGMAVAYITSKDFLFWFRSHTAKEIKWGGAKHHPEDKDDGQRMHPRSSFKAFLEVVKSRSLPWENAEMDAIHSLLILRDSFKDAEASNSKAVVHAQLGEMELQGIDELSSVAREMVRLIETATAPIFAVDVEGRINGWNAKVAELTDLSVEEAMGKSLVHDLVHKESQETAEKLLFNALRGEEDKNVEIKLRTFGPEQLKKAVFVVVNACSSKDYTNNIVGVCFVGQDVTGQKVVMDKFIHIQGDYKAIVHSPNPLIPPIFASDENTCCSEWNTAMEKLTGWSRGEIIGKMLVGEIFGSCCRLKGPDAMTKFMIVLHNAIGVQDTDKFPFSFFDRNGKYVQALLTANKRVNMEGQIIGAFCFIQIASPELQQALRVQRQQEKKCYSQMKELAYLCQEIKSPLNGIRFTNSLLEATDLTENQKQYLETSAACERQMSKIIRDVDLENIEDGSLTLEKEEFFLGSVIDAVVSQVMLLLRERSVQLIRDIPEEIKTLTVHGDQVRIQQVLADFLLNMVRYAPSPDGWVEIQLQPNMKQISDEVTVVHIEFRIVCPGEGLPPELVQDMFHSSRWVTKEGLGLSMCRKILKLMNGDIQYIRESERCYFLIILDLPMTRRGSKSLG</sequence>
<dbReference type="EMBL" id="L10114">
    <property type="protein sequence ID" value="AAA34092.1"/>
    <property type="molecule type" value="Genomic_DNA"/>
</dbReference>
<dbReference type="EMBL" id="M65023">
    <property type="protein sequence ID" value="AAA34093.1"/>
    <property type="molecule type" value="mRNA"/>
</dbReference>
<dbReference type="PIR" id="T03668">
    <property type="entry name" value="T03668"/>
</dbReference>
<dbReference type="SMR" id="P29130"/>
<dbReference type="STRING" id="4097.P29130"/>
<dbReference type="PaxDb" id="4097-P29130"/>
<dbReference type="Proteomes" id="UP000084051">
    <property type="component" value="Unplaced"/>
</dbReference>
<dbReference type="GO" id="GO:0005634">
    <property type="term" value="C:nucleus"/>
    <property type="evidence" value="ECO:0000318"/>
    <property type="project" value="GO_Central"/>
</dbReference>
<dbReference type="GO" id="GO:0000155">
    <property type="term" value="F:phosphorelay sensor kinase activity"/>
    <property type="evidence" value="ECO:0007669"/>
    <property type="project" value="InterPro"/>
</dbReference>
<dbReference type="GO" id="GO:0009881">
    <property type="term" value="F:photoreceptor activity"/>
    <property type="evidence" value="ECO:0007669"/>
    <property type="project" value="UniProtKB-KW"/>
</dbReference>
<dbReference type="GO" id="GO:0042803">
    <property type="term" value="F:protein homodimerization activity"/>
    <property type="evidence" value="ECO:0007669"/>
    <property type="project" value="InterPro"/>
</dbReference>
<dbReference type="GO" id="GO:0009584">
    <property type="term" value="P:detection of visible light"/>
    <property type="evidence" value="ECO:0007669"/>
    <property type="project" value="InterPro"/>
</dbReference>
<dbReference type="GO" id="GO:0009585">
    <property type="term" value="P:red, far-red light phototransduction"/>
    <property type="evidence" value="ECO:0007669"/>
    <property type="project" value="InterPro"/>
</dbReference>
<dbReference type="GO" id="GO:0006355">
    <property type="term" value="P:regulation of DNA-templated transcription"/>
    <property type="evidence" value="ECO:0007669"/>
    <property type="project" value="InterPro"/>
</dbReference>
<dbReference type="CDD" id="cd16932">
    <property type="entry name" value="HATPase_Phy-like"/>
    <property type="match status" value="1"/>
</dbReference>
<dbReference type="CDD" id="cd00082">
    <property type="entry name" value="HisKA"/>
    <property type="match status" value="1"/>
</dbReference>
<dbReference type="CDD" id="cd00130">
    <property type="entry name" value="PAS"/>
    <property type="match status" value="2"/>
</dbReference>
<dbReference type="FunFam" id="1.10.287.130:FF:000029">
    <property type="entry name" value="Phytochrome"/>
    <property type="match status" value="1"/>
</dbReference>
<dbReference type="FunFam" id="3.30.450.20:FF:000034">
    <property type="entry name" value="Phytochrome"/>
    <property type="match status" value="1"/>
</dbReference>
<dbReference type="FunFam" id="3.30.450.20:FF:000039">
    <property type="entry name" value="Phytochrome"/>
    <property type="match status" value="1"/>
</dbReference>
<dbReference type="FunFam" id="3.30.450.270:FF:000001">
    <property type="entry name" value="Phytochrome"/>
    <property type="match status" value="1"/>
</dbReference>
<dbReference type="FunFam" id="3.30.565.10:FF:000044">
    <property type="entry name" value="Phytochrome"/>
    <property type="match status" value="1"/>
</dbReference>
<dbReference type="Gene3D" id="1.10.287.130">
    <property type="match status" value="1"/>
</dbReference>
<dbReference type="Gene3D" id="3.30.450.270">
    <property type="match status" value="1"/>
</dbReference>
<dbReference type="Gene3D" id="3.30.450.40">
    <property type="match status" value="1"/>
</dbReference>
<dbReference type="Gene3D" id="3.30.565.10">
    <property type="entry name" value="Histidine kinase-like ATPase, C-terminal domain"/>
    <property type="match status" value="1"/>
</dbReference>
<dbReference type="Gene3D" id="3.30.450.20">
    <property type="entry name" value="PAS domain"/>
    <property type="match status" value="3"/>
</dbReference>
<dbReference type="InterPro" id="IPR003018">
    <property type="entry name" value="GAF"/>
</dbReference>
<dbReference type="InterPro" id="IPR029016">
    <property type="entry name" value="GAF-like_dom_sf"/>
</dbReference>
<dbReference type="InterPro" id="IPR036890">
    <property type="entry name" value="HATPase_C_sf"/>
</dbReference>
<dbReference type="InterPro" id="IPR005467">
    <property type="entry name" value="His_kinase_dom"/>
</dbReference>
<dbReference type="InterPro" id="IPR003661">
    <property type="entry name" value="HisK_dim/P_dom"/>
</dbReference>
<dbReference type="InterPro" id="IPR036097">
    <property type="entry name" value="HisK_dim/P_sf"/>
</dbReference>
<dbReference type="InterPro" id="IPR000014">
    <property type="entry name" value="PAS"/>
</dbReference>
<dbReference type="InterPro" id="IPR035965">
    <property type="entry name" value="PAS-like_dom_sf"/>
</dbReference>
<dbReference type="InterPro" id="IPR013654">
    <property type="entry name" value="PAS_2"/>
</dbReference>
<dbReference type="InterPro" id="IPR013767">
    <property type="entry name" value="PAS_fold"/>
</dbReference>
<dbReference type="InterPro" id="IPR044767">
    <property type="entry name" value="Phy_HATPase-like"/>
</dbReference>
<dbReference type="InterPro" id="IPR016132">
    <property type="entry name" value="Phyto_chromo_attachment"/>
</dbReference>
<dbReference type="InterPro" id="IPR013516">
    <property type="entry name" value="Phyto_chromo_BS"/>
</dbReference>
<dbReference type="InterPro" id="IPR001294">
    <property type="entry name" value="Phytochrome"/>
</dbReference>
<dbReference type="InterPro" id="IPR012129">
    <property type="entry name" value="Phytochrome_A-E"/>
</dbReference>
<dbReference type="InterPro" id="IPR013515">
    <property type="entry name" value="Phytochrome_cen-reg"/>
</dbReference>
<dbReference type="InterPro" id="IPR043150">
    <property type="entry name" value="Phytochrome_PHY_sf"/>
</dbReference>
<dbReference type="NCBIfam" id="TIGR00229">
    <property type="entry name" value="sensory_box"/>
    <property type="match status" value="1"/>
</dbReference>
<dbReference type="PANTHER" id="PTHR47876">
    <property type="entry name" value="OS08G0260000 PROTEIN"/>
    <property type="match status" value="1"/>
</dbReference>
<dbReference type="PANTHER" id="PTHR47876:SF3">
    <property type="entry name" value="PHYTOCHROME 1"/>
    <property type="match status" value="1"/>
</dbReference>
<dbReference type="Pfam" id="PF01590">
    <property type="entry name" value="GAF"/>
    <property type="match status" value="1"/>
</dbReference>
<dbReference type="Pfam" id="PF02518">
    <property type="entry name" value="HATPase_c"/>
    <property type="match status" value="1"/>
</dbReference>
<dbReference type="Pfam" id="PF00512">
    <property type="entry name" value="HisKA"/>
    <property type="match status" value="1"/>
</dbReference>
<dbReference type="Pfam" id="PF00989">
    <property type="entry name" value="PAS"/>
    <property type="match status" value="2"/>
</dbReference>
<dbReference type="Pfam" id="PF08446">
    <property type="entry name" value="PAS_2"/>
    <property type="match status" value="1"/>
</dbReference>
<dbReference type="Pfam" id="PF00360">
    <property type="entry name" value="PHY"/>
    <property type="match status" value="1"/>
</dbReference>
<dbReference type="PIRSF" id="PIRSF000084">
    <property type="entry name" value="Phytochrome"/>
    <property type="match status" value="1"/>
</dbReference>
<dbReference type="PRINTS" id="PR01033">
    <property type="entry name" value="PHYTOCHROME"/>
</dbReference>
<dbReference type="SMART" id="SM00065">
    <property type="entry name" value="GAF"/>
    <property type="match status" value="1"/>
</dbReference>
<dbReference type="SMART" id="SM00387">
    <property type="entry name" value="HATPase_c"/>
    <property type="match status" value="1"/>
</dbReference>
<dbReference type="SMART" id="SM00388">
    <property type="entry name" value="HisKA"/>
    <property type="match status" value="1"/>
</dbReference>
<dbReference type="SMART" id="SM00091">
    <property type="entry name" value="PAS"/>
    <property type="match status" value="2"/>
</dbReference>
<dbReference type="SUPFAM" id="SSF55874">
    <property type="entry name" value="ATPase domain of HSP90 chaperone/DNA topoisomerase II/histidine kinase"/>
    <property type="match status" value="1"/>
</dbReference>
<dbReference type="SUPFAM" id="SSF55781">
    <property type="entry name" value="GAF domain-like"/>
    <property type="match status" value="2"/>
</dbReference>
<dbReference type="SUPFAM" id="SSF47384">
    <property type="entry name" value="Homodimeric domain of signal transducing histidine kinase"/>
    <property type="match status" value="1"/>
</dbReference>
<dbReference type="SUPFAM" id="SSF55785">
    <property type="entry name" value="PYP-like sensor domain (PAS domain)"/>
    <property type="match status" value="3"/>
</dbReference>
<dbReference type="PROSITE" id="PS50109">
    <property type="entry name" value="HIS_KIN"/>
    <property type="match status" value="1"/>
</dbReference>
<dbReference type="PROSITE" id="PS50112">
    <property type="entry name" value="PAS"/>
    <property type="match status" value="2"/>
</dbReference>
<dbReference type="PROSITE" id="PS00245">
    <property type="entry name" value="PHYTOCHROME_1"/>
    <property type="match status" value="1"/>
</dbReference>
<dbReference type="PROSITE" id="PS50046">
    <property type="entry name" value="PHYTOCHROME_2"/>
    <property type="match status" value="1"/>
</dbReference>
<name>PHYB_TOBAC</name>
<gene>
    <name type="primary">PHYB</name>
</gene>
<feature type="chain" id="PRO_0000171996" description="Phytochrome B">
    <location>
        <begin position="1"/>
        <end position="1132"/>
    </location>
</feature>
<feature type="domain" description="GAF">
    <location>
        <begin position="231"/>
        <end position="409"/>
    </location>
</feature>
<feature type="domain" description="PAS 1" evidence="3">
    <location>
        <begin position="623"/>
        <end position="694"/>
    </location>
</feature>
<feature type="domain" description="PAS 2" evidence="3">
    <location>
        <begin position="757"/>
        <end position="828"/>
    </location>
</feature>
<feature type="domain" description="Histidine kinase" evidence="2">
    <location>
        <begin position="905"/>
        <end position="1125"/>
    </location>
</feature>
<feature type="region of interest" description="Disordered" evidence="4">
    <location>
        <begin position="1"/>
        <end position="27"/>
    </location>
</feature>
<feature type="compositionally biased region" description="Basic residues" evidence="4">
    <location>
        <begin position="1"/>
        <end position="11"/>
    </location>
</feature>
<feature type="compositionally biased region" description="Low complexity" evidence="4">
    <location>
        <begin position="12"/>
        <end position="26"/>
    </location>
</feature>
<feature type="binding site" description="covalent" evidence="1">
    <location>
        <position position="336"/>
    </location>
    <ligand>
        <name>phytochromobilin</name>
        <dbReference type="ChEBI" id="CHEBI:189064"/>
    </ligand>
</feature>
<feature type="sequence conflict" description="In Ref. 2; AAA34093." evidence="5" ref="2">
    <original>L</original>
    <variation>S</variation>
    <location>
        <position position="507"/>
    </location>
</feature>
<feature type="sequence conflict" description="In Ref. 2; AAA34093." evidence="5" ref="2">
    <original>L</original>
    <variation>LQ</variation>
    <location>
        <position position="586"/>
    </location>
</feature>
<evidence type="ECO:0000250" key="1"/>
<evidence type="ECO:0000255" key="2">
    <source>
        <dbReference type="PROSITE-ProRule" id="PRU00107"/>
    </source>
</evidence>
<evidence type="ECO:0000255" key="3">
    <source>
        <dbReference type="PROSITE-ProRule" id="PRU00140"/>
    </source>
</evidence>
<evidence type="ECO:0000256" key="4">
    <source>
        <dbReference type="SAM" id="MobiDB-lite"/>
    </source>
</evidence>
<evidence type="ECO:0000305" key="5"/>